<protein>
    <recommendedName>
        <fullName>Tubulin polymerization-promoting protein family member 3</fullName>
    </recommendedName>
</protein>
<proteinExistence type="evidence at protein level"/>
<comment type="function">
    <text evidence="1 2">Regulator of microtubule dynamic that has microtubule bundling activity (By similarity). Required for embryo implantation; possibly by regulating beta-catenin (By similarity). Also required for decidualization via regulation of beta-catenin (By similarity).</text>
</comment>
<comment type="subcellular location">
    <subcellularLocation>
        <location evidence="1">Cytoplasm</location>
    </subcellularLocation>
    <subcellularLocation>
        <location evidence="1">Cytoplasm</location>
        <location evidence="1">Cytoskeleton</location>
    </subcellularLocation>
</comment>
<comment type="similarity">
    <text evidence="3">Belongs to the TPPP family.</text>
</comment>
<accession>Q3ZCC8</accession>
<evidence type="ECO:0000250" key="1">
    <source>
        <dbReference type="UniProtKB" id="Q9BW30"/>
    </source>
</evidence>
<evidence type="ECO:0000250" key="2">
    <source>
        <dbReference type="UniProtKB" id="Q9CRB6"/>
    </source>
</evidence>
<evidence type="ECO:0000305" key="3"/>
<reference key="1">
    <citation type="submission" date="2005-08" db="EMBL/GenBank/DDBJ databases">
        <authorList>
            <consortium name="NIH - Mammalian Gene Collection (MGC) project"/>
        </authorList>
    </citation>
    <scope>NUCLEOTIDE SEQUENCE [LARGE SCALE MRNA]</scope>
    <source>
        <strain>Crossbred X Angus</strain>
        <tissue>Ileum</tissue>
    </source>
</reference>
<reference key="2">
    <citation type="journal article" date="2006" name="Biochemistry">
        <title>Tubulin polymerization promoting proteins (TPPPs): members of a new family with distinct structures and functions.</title>
        <authorList>
            <person name="Vincze O."/>
            <person name="Toekesi N."/>
            <person name="Olah J."/>
            <person name="Hlavanda E."/>
            <person name="Zotter A."/>
            <person name="Horvath I."/>
            <person name="Lehotzky A."/>
            <person name="Tirian L."/>
            <person name="Medzihradszky K.F."/>
            <person name="Kovacs J."/>
            <person name="Orosz F."/>
            <person name="Ovadi J."/>
        </authorList>
    </citation>
    <scope>IDENTIFICATION BY MASS SPECTROMETRY</scope>
</reference>
<keyword id="KW-0007">Acetylation</keyword>
<keyword id="KW-0963">Cytoplasm</keyword>
<keyword id="KW-0206">Cytoskeleton</keyword>
<keyword id="KW-0493">Microtubule</keyword>
<keyword id="KW-1185">Reference proteome</keyword>
<organism>
    <name type="scientific">Bos taurus</name>
    <name type="common">Bovine</name>
    <dbReference type="NCBI Taxonomy" id="9913"/>
    <lineage>
        <taxon>Eukaryota</taxon>
        <taxon>Metazoa</taxon>
        <taxon>Chordata</taxon>
        <taxon>Craniata</taxon>
        <taxon>Vertebrata</taxon>
        <taxon>Euteleostomi</taxon>
        <taxon>Mammalia</taxon>
        <taxon>Eutheria</taxon>
        <taxon>Laurasiatheria</taxon>
        <taxon>Artiodactyla</taxon>
        <taxon>Ruminantia</taxon>
        <taxon>Pecora</taxon>
        <taxon>Bovidae</taxon>
        <taxon>Bovinae</taxon>
        <taxon>Bos</taxon>
    </lineage>
</organism>
<feature type="initiator methionine" description="Removed" evidence="1">
    <location>
        <position position="1"/>
    </location>
</feature>
<feature type="chain" id="PRO_0000289005" description="Tubulin polymerization-promoting protein family member 3">
    <location>
        <begin position="2"/>
        <end position="176"/>
    </location>
</feature>
<feature type="modified residue" description="N-acetylalanine" evidence="1">
    <location>
        <position position="2"/>
    </location>
</feature>
<name>TPPP3_BOVIN</name>
<sequence length="176" mass="18942">MAASTDVAGLEESFRKFAIHGDPKASGHEMNGKNWAKLCKDCKVADGKAVTGTDVDIVFSKVKAKSARVINYEEFKKALEELAPKRFKGKSKEEAFDAICQLVAGKEPANVGVTKAKTGGAVERLTDTSKYTGSHKERFDESGKGKGIAGRQDILDDSGYVSAYKNAGTYDAKVKK</sequence>
<dbReference type="EMBL" id="BC102515">
    <property type="protein sequence ID" value="AAI02516.1"/>
    <property type="molecule type" value="mRNA"/>
</dbReference>
<dbReference type="RefSeq" id="NP_001029946.1">
    <property type="nucleotide sequence ID" value="NM_001034774.2"/>
</dbReference>
<dbReference type="RefSeq" id="XP_005218783.1">
    <property type="nucleotide sequence ID" value="XM_005218726.5"/>
</dbReference>
<dbReference type="SMR" id="Q3ZCC8"/>
<dbReference type="FunCoup" id="Q3ZCC8">
    <property type="interactions" value="482"/>
</dbReference>
<dbReference type="STRING" id="9913.ENSBTAP00000026407"/>
<dbReference type="PaxDb" id="9913-ENSBTAP00000026407"/>
<dbReference type="Ensembl" id="ENSBTAT00000126221.1">
    <property type="protein sequence ID" value="ENSBTAP00000080601.1"/>
    <property type="gene ID" value="ENSBTAG00000019822.7"/>
</dbReference>
<dbReference type="GeneID" id="614988"/>
<dbReference type="KEGG" id="bta:614988"/>
<dbReference type="CTD" id="51673"/>
<dbReference type="VGNC" id="VGNC:36260">
    <property type="gene designation" value="TPPP3"/>
</dbReference>
<dbReference type="eggNOG" id="KOG4070">
    <property type="taxonomic scope" value="Eukaryota"/>
</dbReference>
<dbReference type="GeneTree" id="ENSGT00940000153875"/>
<dbReference type="HOGENOM" id="CLU_091734_0_0_1"/>
<dbReference type="InParanoid" id="Q3ZCC8"/>
<dbReference type="OrthoDB" id="548799at2759"/>
<dbReference type="TreeFam" id="TF314440"/>
<dbReference type="Proteomes" id="UP000009136">
    <property type="component" value="Chromosome 18"/>
</dbReference>
<dbReference type="GO" id="GO:0005874">
    <property type="term" value="C:microtubule"/>
    <property type="evidence" value="ECO:0007669"/>
    <property type="project" value="UniProtKB-KW"/>
</dbReference>
<dbReference type="GO" id="GO:0097427">
    <property type="term" value="C:microtubule bundle"/>
    <property type="evidence" value="ECO:0007669"/>
    <property type="project" value="Ensembl"/>
</dbReference>
<dbReference type="GO" id="GO:0048471">
    <property type="term" value="C:perinuclear region of cytoplasm"/>
    <property type="evidence" value="ECO:0007669"/>
    <property type="project" value="Ensembl"/>
</dbReference>
<dbReference type="GO" id="GO:0015631">
    <property type="term" value="F:tubulin binding"/>
    <property type="evidence" value="ECO:0000250"/>
    <property type="project" value="UniProtKB"/>
</dbReference>
<dbReference type="GO" id="GO:0046697">
    <property type="term" value="P:decidualization"/>
    <property type="evidence" value="ECO:0000250"/>
    <property type="project" value="UniProtKB"/>
</dbReference>
<dbReference type="GO" id="GO:0007566">
    <property type="term" value="P:embryo implantation"/>
    <property type="evidence" value="ECO:0000250"/>
    <property type="project" value="UniProtKB"/>
</dbReference>
<dbReference type="GO" id="GO:0001578">
    <property type="term" value="P:microtubule bundle formation"/>
    <property type="evidence" value="ECO:0000250"/>
    <property type="project" value="UniProtKB"/>
</dbReference>
<dbReference type="GO" id="GO:0046785">
    <property type="term" value="P:microtubule polymerization"/>
    <property type="evidence" value="ECO:0000318"/>
    <property type="project" value="GO_Central"/>
</dbReference>
<dbReference type="GO" id="GO:0032273">
    <property type="term" value="P:positive regulation of protein polymerization"/>
    <property type="evidence" value="ECO:0000318"/>
    <property type="project" value="GO_Central"/>
</dbReference>
<dbReference type="FunFam" id="1.10.238.10:FF:000057">
    <property type="entry name" value="Tubulin polymerization-promoting protein family member 3"/>
    <property type="match status" value="1"/>
</dbReference>
<dbReference type="Gene3D" id="1.10.238.10">
    <property type="entry name" value="EF-hand"/>
    <property type="match status" value="1"/>
</dbReference>
<dbReference type="InterPro" id="IPR011992">
    <property type="entry name" value="EF-hand-dom_pair"/>
</dbReference>
<dbReference type="InterPro" id="IPR008907">
    <property type="entry name" value="TPP/p25"/>
</dbReference>
<dbReference type="PANTHER" id="PTHR12932">
    <property type="entry name" value="P25 ALPHA-RELATED"/>
    <property type="match status" value="1"/>
</dbReference>
<dbReference type="PANTHER" id="PTHR12932:SF16">
    <property type="entry name" value="TUBULIN POLYMERIZATION-PROMOTING PROTEIN FAMILY MEMBER 3"/>
    <property type="match status" value="1"/>
</dbReference>
<dbReference type="Pfam" id="PF05517">
    <property type="entry name" value="p25-alpha"/>
    <property type="match status" value="1"/>
</dbReference>
<dbReference type="SUPFAM" id="SSF47473">
    <property type="entry name" value="EF-hand"/>
    <property type="match status" value="1"/>
</dbReference>
<gene>
    <name type="primary">TPPP3</name>
</gene>